<accession>Q8CMH7</accession>
<evidence type="ECO:0000255" key="1">
    <source>
        <dbReference type="HAMAP-Rule" id="MF_00740"/>
    </source>
</evidence>
<comment type="function">
    <text evidence="1">Isomerase that catalyzes the conversion of deoxy-ribose 1-phosphate (dRib-1-P) and ribose 1-phosphate (Rib-1-P) to deoxy-ribose 5-phosphate (dRib-5-P) and ribose 5-phosphate (Rib-5-P), respectively.</text>
</comment>
<comment type="catalytic activity">
    <reaction evidence="1">
        <text>2-deoxy-alpha-D-ribose 1-phosphate = 2-deoxy-D-ribose 5-phosphate</text>
        <dbReference type="Rhea" id="RHEA:27658"/>
        <dbReference type="ChEBI" id="CHEBI:57259"/>
        <dbReference type="ChEBI" id="CHEBI:62877"/>
        <dbReference type="EC" id="5.4.2.7"/>
    </reaction>
</comment>
<comment type="catalytic activity">
    <reaction evidence="1">
        <text>alpha-D-ribose 1-phosphate = D-ribose 5-phosphate</text>
        <dbReference type="Rhea" id="RHEA:18793"/>
        <dbReference type="ChEBI" id="CHEBI:57720"/>
        <dbReference type="ChEBI" id="CHEBI:78346"/>
        <dbReference type="EC" id="5.4.2.7"/>
    </reaction>
</comment>
<comment type="cofactor">
    <cofactor evidence="1">
        <name>Mn(2+)</name>
        <dbReference type="ChEBI" id="CHEBI:29035"/>
    </cofactor>
    <text evidence="1">Binds 2 manganese ions.</text>
</comment>
<comment type="pathway">
    <text evidence="1">Carbohydrate degradation; 2-deoxy-D-ribose 1-phosphate degradation; D-glyceraldehyde 3-phosphate and acetaldehyde from 2-deoxy-alpha-D-ribose 1-phosphate: step 1/2.</text>
</comment>
<comment type="subcellular location">
    <subcellularLocation>
        <location evidence="1">Cytoplasm</location>
    </subcellularLocation>
</comment>
<comment type="similarity">
    <text evidence="1">Belongs to the phosphopentomutase family.</text>
</comment>
<keyword id="KW-0963">Cytoplasm</keyword>
<keyword id="KW-0413">Isomerase</keyword>
<keyword id="KW-0464">Manganese</keyword>
<keyword id="KW-0479">Metal-binding</keyword>
<feature type="chain" id="PRO_0000199849" description="Phosphopentomutase">
    <location>
        <begin position="1"/>
        <end position="403"/>
    </location>
</feature>
<feature type="binding site" evidence="1">
    <location>
        <position position="13"/>
    </location>
    <ligand>
        <name>Mn(2+)</name>
        <dbReference type="ChEBI" id="CHEBI:29035"/>
        <label>1</label>
    </ligand>
</feature>
<feature type="binding site" evidence="1">
    <location>
        <position position="298"/>
    </location>
    <ligand>
        <name>Mn(2+)</name>
        <dbReference type="ChEBI" id="CHEBI:29035"/>
        <label>2</label>
    </ligand>
</feature>
<feature type="binding site" evidence="1">
    <location>
        <position position="303"/>
    </location>
    <ligand>
        <name>Mn(2+)</name>
        <dbReference type="ChEBI" id="CHEBI:29035"/>
        <label>2</label>
    </ligand>
</feature>
<feature type="binding site" evidence="1">
    <location>
        <position position="339"/>
    </location>
    <ligand>
        <name>Mn(2+)</name>
        <dbReference type="ChEBI" id="CHEBI:29035"/>
        <label>1</label>
    </ligand>
</feature>
<feature type="binding site" evidence="1">
    <location>
        <position position="340"/>
    </location>
    <ligand>
        <name>Mn(2+)</name>
        <dbReference type="ChEBI" id="CHEBI:29035"/>
        <label>1</label>
    </ligand>
</feature>
<feature type="binding site" evidence="1">
    <location>
        <position position="351"/>
    </location>
    <ligand>
        <name>Mn(2+)</name>
        <dbReference type="ChEBI" id="CHEBI:29035"/>
        <label>2</label>
    </ligand>
</feature>
<dbReference type="EC" id="5.4.2.7" evidence="1"/>
<dbReference type="EMBL" id="AL766849">
    <property type="protein sequence ID" value="CAD46914.1"/>
    <property type="molecule type" value="Genomic_DNA"/>
</dbReference>
<dbReference type="EMBL" id="AL766855">
    <property type="protein sequence ID" value="CAD47682.1"/>
    <property type="molecule type" value="Genomic_DNA"/>
</dbReference>
<dbReference type="RefSeq" id="WP_000077187.1">
    <property type="nucleotide sequence ID" value="NC_004368.1"/>
</dbReference>
<dbReference type="SMR" id="Q8CMH7"/>
<dbReference type="KEGG" id="san:gbs1255"/>
<dbReference type="KEGG" id="san:gbs2023"/>
<dbReference type="eggNOG" id="COG1015">
    <property type="taxonomic scope" value="Bacteria"/>
</dbReference>
<dbReference type="HOGENOM" id="CLU_053861_0_0_9"/>
<dbReference type="UniPathway" id="UPA00002">
    <property type="reaction ID" value="UER00467"/>
</dbReference>
<dbReference type="Proteomes" id="UP000000823">
    <property type="component" value="Chromosome"/>
</dbReference>
<dbReference type="GO" id="GO:0005829">
    <property type="term" value="C:cytosol"/>
    <property type="evidence" value="ECO:0007669"/>
    <property type="project" value="TreeGrafter"/>
</dbReference>
<dbReference type="GO" id="GO:0000287">
    <property type="term" value="F:magnesium ion binding"/>
    <property type="evidence" value="ECO:0007669"/>
    <property type="project" value="InterPro"/>
</dbReference>
<dbReference type="GO" id="GO:0030145">
    <property type="term" value="F:manganese ion binding"/>
    <property type="evidence" value="ECO:0007669"/>
    <property type="project" value="UniProtKB-UniRule"/>
</dbReference>
<dbReference type="GO" id="GO:0008973">
    <property type="term" value="F:phosphopentomutase activity"/>
    <property type="evidence" value="ECO:0007669"/>
    <property type="project" value="UniProtKB-UniRule"/>
</dbReference>
<dbReference type="GO" id="GO:0006018">
    <property type="term" value="P:2-deoxyribose 1-phosphate catabolic process"/>
    <property type="evidence" value="ECO:0007669"/>
    <property type="project" value="UniProtKB-UniRule"/>
</dbReference>
<dbReference type="GO" id="GO:0006015">
    <property type="term" value="P:5-phosphoribose 1-diphosphate biosynthetic process"/>
    <property type="evidence" value="ECO:0007669"/>
    <property type="project" value="UniProtKB-UniPathway"/>
</dbReference>
<dbReference type="GO" id="GO:0043094">
    <property type="term" value="P:metabolic compound salvage"/>
    <property type="evidence" value="ECO:0007669"/>
    <property type="project" value="InterPro"/>
</dbReference>
<dbReference type="GO" id="GO:0009117">
    <property type="term" value="P:nucleotide metabolic process"/>
    <property type="evidence" value="ECO:0007669"/>
    <property type="project" value="InterPro"/>
</dbReference>
<dbReference type="CDD" id="cd16009">
    <property type="entry name" value="PPM"/>
    <property type="match status" value="1"/>
</dbReference>
<dbReference type="FunFam" id="3.30.70.1250:FF:000001">
    <property type="entry name" value="Phosphopentomutase"/>
    <property type="match status" value="1"/>
</dbReference>
<dbReference type="Gene3D" id="3.40.720.10">
    <property type="entry name" value="Alkaline Phosphatase, subunit A"/>
    <property type="match status" value="1"/>
</dbReference>
<dbReference type="Gene3D" id="3.30.70.1250">
    <property type="entry name" value="Phosphopentomutase"/>
    <property type="match status" value="1"/>
</dbReference>
<dbReference type="HAMAP" id="MF_00740">
    <property type="entry name" value="Phosphopentomut"/>
    <property type="match status" value="1"/>
</dbReference>
<dbReference type="InterPro" id="IPR017850">
    <property type="entry name" value="Alkaline_phosphatase_core_sf"/>
</dbReference>
<dbReference type="InterPro" id="IPR010045">
    <property type="entry name" value="DeoB"/>
</dbReference>
<dbReference type="InterPro" id="IPR006124">
    <property type="entry name" value="Metalloenzyme"/>
</dbReference>
<dbReference type="InterPro" id="IPR024052">
    <property type="entry name" value="Phosphopentomutase_DeoB_cap_sf"/>
</dbReference>
<dbReference type="NCBIfam" id="TIGR01696">
    <property type="entry name" value="deoB"/>
    <property type="match status" value="1"/>
</dbReference>
<dbReference type="NCBIfam" id="NF003766">
    <property type="entry name" value="PRK05362.1"/>
    <property type="match status" value="1"/>
</dbReference>
<dbReference type="PANTHER" id="PTHR21110">
    <property type="entry name" value="PHOSPHOPENTOMUTASE"/>
    <property type="match status" value="1"/>
</dbReference>
<dbReference type="PANTHER" id="PTHR21110:SF0">
    <property type="entry name" value="PHOSPHOPENTOMUTASE"/>
    <property type="match status" value="1"/>
</dbReference>
<dbReference type="Pfam" id="PF01676">
    <property type="entry name" value="Metalloenzyme"/>
    <property type="match status" value="1"/>
</dbReference>
<dbReference type="PIRSF" id="PIRSF001491">
    <property type="entry name" value="Ppentomutase"/>
    <property type="match status" value="1"/>
</dbReference>
<dbReference type="SUPFAM" id="SSF53649">
    <property type="entry name" value="Alkaline phosphatase-like"/>
    <property type="match status" value="1"/>
</dbReference>
<dbReference type="SUPFAM" id="SSF143856">
    <property type="entry name" value="DeoB insert domain-like"/>
    <property type="match status" value="1"/>
</dbReference>
<gene>
    <name evidence="1" type="primary">deoB1</name>
    <name type="ordered locus">gbs1255</name>
</gene>
<gene>
    <name evidence="1" type="primary">deoB2</name>
    <name type="ordered locus">gbs2023</name>
</gene>
<organism>
    <name type="scientific">Streptococcus agalactiae serotype III (strain NEM316)</name>
    <dbReference type="NCBI Taxonomy" id="211110"/>
    <lineage>
        <taxon>Bacteria</taxon>
        <taxon>Bacillati</taxon>
        <taxon>Bacillota</taxon>
        <taxon>Bacilli</taxon>
        <taxon>Lactobacillales</taxon>
        <taxon>Streptococcaceae</taxon>
        <taxon>Streptococcus</taxon>
    </lineage>
</organism>
<proteinExistence type="inferred from homology"/>
<protein>
    <recommendedName>
        <fullName evidence="1">Phosphopentomutase</fullName>
        <ecNumber evidence="1">5.4.2.7</ecNumber>
    </recommendedName>
    <alternativeName>
        <fullName evidence="1">Phosphodeoxyribomutase</fullName>
    </alternativeName>
</protein>
<sequence length="403" mass="44202">MSQFDRIHLVVLDSVGIGAAPDANDFVNAGVPDGASDTLGHISKTVGLAVPNMAKIGLGNIPRPQALKTVPAEENPSGYATKLQEVSLGKDTMTGHWEIMGLNITEPFDTFWNGFPEDIITKIEDFSGRKVIREANKPYSGTAVIDDFGPRQMETGELIIYTSADPVLQIAAHEDIIPLEELYRICEYARSITMERPALLGRIIARPYVGEPGNFTRTANRHDYAVSPFEDTVLNKLDQAGIDTYAVGKINDIFNGSGINHDMGHNKSNSHGIDTLIKTMGLSEFEKGFSFTNLVDFDALYGHRRDPHGYRDCLHEFDERLPEIISAMRDKDLLLITADHGNDPTYAGTDHTREYIPLLAYSPSFTGNGLIPVGHFADISATVADNFGVDTAMIGESFLQDLV</sequence>
<reference key="1">
    <citation type="journal article" date="2002" name="Mol. Microbiol.">
        <title>Genome sequence of Streptococcus agalactiae, a pathogen causing invasive neonatal disease.</title>
        <authorList>
            <person name="Glaser P."/>
            <person name="Rusniok C."/>
            <person name="Buchrieser C."/>
            <person name="Chevalier F."/>
            <person name="Frangeul L."/>
            <person name="Msadek T."/>
            <person name="Zouine M."/>
            <person name="Couve E."/>
            <person name="Lalioui L."/>
            <person name="Poyart C."/>
            <person name="Trieu-Cuot P."/>
            <person name="Kunst F."/>
        </authorList>
    </citation>
    <scope>NUCLEOTIDE SEQUENCE [LARGE SCALE GENOMIC DNA]</scope>
    <source>
        <strain>NEM316</strain>
    </source>
</reference>
<name>DEOB_STRA3</name>